<feature type="transit peptide" description="Chloroplast" evidence="1">
    <location>
        <begin position="1"/>
        <end position="43"/>
    </location>
</feature>
<feature type="chain" id="PRO_0000352246" description="Protein BPS1, chloroplastic">
    <location>
        <begin position="44"/>
        <end position="349"/>
    </location>
</feature>
<accession>Q9LMM6</accession>
<comment type="function">
    <text evidence="2 3">Required for normal root and shoot development. Prevents constitutive production of a root mobile carotenoid-derived signaling compound that is capable of arresting shoot and leaf development.</text>
</comment>
<comment type="subcellular location">
    <subcellularLocation>
        <location evidence="5">Plastid</location>
        <location evidence="5">Chloroplast</location>
    </subcellularLocation>
</comment>
<comment type="tissue specificity">
    <text evidence="2">Expressed in roots, hypocotyls, cotyledons, leaves, flowers and siliques.</text>
</comment>
<comment type="miscellaneous">
    <text>The mobile signal produced in absence of BPS1 is neither abscisic acid nor the MAX-dependent hormone.</text>
</comment>
<evidence type="ECO:0000255" key="1"/>
<evidence type="ECO:0000269" key="2">
    <source>
    </source>
</evidence>
<evidence type="ECO:0000269" key="3">
    <source>
    </source>
</evidence>
<evidence type="ECO:0000303" key="4">
    <source>
    </source>
</evidence>
<evidence type="ECO:0000305" key="5"/>
<evidence type="ECO:0000312" key="6">
    <source>
        <dbReference type="Araport" id="AT1G01550"/>
    </source>
</evidence>
<evidence type="ECO:0000312" key="7">
    <source>
        <dbReference type="EMBL" id="AAF81313.1"/>
    </source>
</evidence>
<gene>
    <name evidence="4" type="primary">BPS1</name>
    <name evidence="6" type="ordered locus">At1g01550</name>
    <name evidence="7" type="ORF">F22L4.9</name>
</gene>
<protein>
    <recommendedName>
        <fullName evidence="4">Protein BPS1, chloroplastic</fullName>
    </recommendedName>
    <alternativeName>
        <fullName evidence="4">Protein BYPASS 1</fullName>
    </alternativeName>
</protein>
<reference key="1">
    <citation type="submission" date="1998-08" db="EMBL/GenBank/DDBJ databases">
        <title>Signal peptide selection derived cDNAs from Arabidopsis thaliana leaves and guard cells.</title>
        <authorList>
            <person name="Stracke R."/>
            <person name="Palme K."/>
        </authorList>
    </citation>
    <scope>NUCLEOTIDE SEQUENCE [MRNA]</scope>
</reference>
<reference key="2">
    <citation type="journal article" date="2000" name="Nature">
        <title>Sequence and analysis of chromosome 1 of the plant Arabidopsis thaliana.</title>
        <authorList>
            <person name="Theologis A."/>
            <person name="Ecker J.R."/>
            <person name="Palm C.J."/>
            <person name="Federspiel N.A."/>
            <person name="Kaul S."/>
            <person name="White O."/>
            <person name="Alonso J."/>
            <person name="Altafi H."/>
            <person name="Araujo R."/>
            <person name="Bowman C.L."/>
            <person name="Brooks S.Y."/>
            <person name="Buehler E."/>
            <person name="Chan A."/>
            <person name="Chao Q."/>
            <person name="Chen H."/>
            <person name="Cheuk R.F."/>
            <person name="Chin C.W."/>
            <person name="Chung M.K."/>
            <person name="Conn L."/>
            <person name="Conway A.B."/>
            <person name="Conway A.R."/>
            <person name="Creasy T.H."/>
            <person name="Dewar K."/>
            <person name="Dunn P."/>
            <person name="Etgu P."/>
            <person name="Feldblyum T.V."/>
            <person name="Feng J.-D."/>
            <person name="Fong B."/>
            <person name="Fujii C.Y."/>
            <person name="Gill J.E."/>
            <person name="Goldsmith A.D."/>
            <person name="Haas B."/>
            <person name="Hansen N.F."/>
            <person name="Hughes B."/>
            <person name="Huizar L."/>
            <person name="Hunter J.L."/>
            <person name="Jenkins J."/>
            <person name="Johnson-Hopson C."/>
            <person name="Khan S."/>
            <person name="Khaykin E."/>
            <person name="Kim C.J."/>
            <person name="Koo H.L."/>
            <person name="Kremenetskaia I."/>
            <person name="Kurtz D.B."/>
            <person name="Kwan A."/>
            <person name="Lam B."/>
            <person name="Langin-Hooper S."/>
            <person name="Lee A."/>
            <person name="Lee J.M."/>
            <person name="Lenz C.A."/>
            <person name="Li J.H."/>
            <person name="Li Y.-P."/>
            <person name="Lin X."/>
            <person name="Liu S.X."/>
            <person name="Liu Z.A."/>
            <person name="Luros J.S."/>
            <person name="Maiti R."/>
            <person name="Marziali A."/>
            <person name="Militscher J."/>
            <person name="Miranda M."/>
            <person name="Nguyen M."/>
            <person name="Nierman W.C."/>
            <person name="Osborne B.I."/>
            <person name="Pai G."/>
            <person name="Peterson J."/>
            <person name="Pham P.K."/>
            <person name="Rizzo M."/>
            <person name="Rooney T."/>
            <person name="Rowley D."/>
            <person name="Sakano H."/>
            <person name="Salzberg S.L."/>
            <person name="Schwartz J.R."/>
            <person name="Shinn P."/>
            <person name="Southwick A.M."/>
            <person name="Sun H."/>
            <person name="Tallon L.J."/>
            <person name="Tambunga G."/>
            <person name="Toriumi M.J."/>
            <person name="Town C.D."/>
            <person name="Utterback T."/>
            <person name="Van Aken S."/>
            <person name="Vaysberg M."/>
            <person name="Vysotskaia V.S."/>
            <person name="Walker M."/>
            <person name="Wu D."/>
            <person name="Yu G."/>
            <person name="Fraser C.M."/>
            <person name="Venter J.C."/>
            <person name="Davis R.W."/>
        </authorList>
    </citation>
    <scope>NUCLEOTIDE SEQUENCE [LARGE SCALE GENOMIC DNA]</scope>
    <source>
        <strain>cv. Columbia</strain>
    </source>
</reference>
<reference key="3">
    <citation type="journal article" date="2017" name="Plant J.">
        <title>Araport11: a complete reannotation of the Arabidopsis thaliana reference genome.</title>
        <authorList>
            <person name="Cheng C.Y."/>
            <person name="Krishnakumar V."/>
            <person name="Chan A.P."/>
            <person name="Thibaud-Nissen F."/>
            <person name="Schobel S."/>
            <person name="Town C.D."/>
        </authorList>
    </citation>
    <scope>GENOME REANNOTATION</scope>
    <source>
        <strain>cv. Columbia</strain>
    </source>
</reference>
<reference key="4">
    <citation type="journal article" date="2003" name="Science">
        <title>Empirical analysis of transcriptional activity in the Arabidopsis genome.</title>
        <authorList>
            <person name="Yamada K."/>
            <person name="Lim J."/>
            <person name="Dale J.M."/>
            <person name="Chen H."/>
            <person name="Shinn P."/>
            <person name="Palm C.J."/>
            <person name="Southwick A.M."/>
            <person name="Wu H.C."/>
            <person name="Kim C.J."/>
            <person name="Nguyen M."/>
            <person name="Pham P.K."/>
            <person name="Cheuk R.F."/>
            <person name="Karlin-Newmann G."/>
            <person name="Liu S.X."/>
            <person name="Lam B."/>
            <person name="Sakano H."/>
            <person name="Wu T."/>
            <person name="Yu G."/>
            <person name="Miranda M."/>
            <person name="Quach H.L."/>
            <person name="Tripp M."/>
            <person name="Chang C.H."/>
            <person name="Lee J.M."/>
            <person name="Toriumi M.J."/>
            <person name="Chan M.M."/>
            <person name="Tang C.C."/>
            <person name="Onodera C.S."/>
            <person name="Deng J.M."/>
            <person name="Akiyama K."/>
            <person name="Ansari Y."/>
            <person name="Arakawa T."/>
            <person name="Banh J."/>
            <person name="Banno F."/>
            <person name="Bowser L."/>
            <person name="Brooks S.Y."/>
            <person name="Carninci P."/>
            <person name="Chao Q."/>
            <person name="Choy N."/>
            <person name="Enju A."/>
            <person name="Goldsmith A.D."/>
            <person name="Gurjal M."/>
            <person name="Hansen N.F."/>
            <person name="Hayashizaki Y."/>
            <person name="Johnson-Hopson C."/>
            <person name="Hsuan V.W."/>
            <person name="Iida K."/>
            <person name="Karnes M."/>
            <person name="Khan S."/>
            <person name="Koesema E."/>
            <person name="Ishida J."/>
            <person name="Jiang P.X."/>
            <person name="Jones T."/>
            <person name="Kawai J."/>
            <person name="Kamiya A."/>
            <person name="Meyers C."/>
            <person name="Nakajima M."/>
            <person name="Narusaka M."/>
            <person name="Seki M."/>
            <person name="Sakurai T."/>
            <person name="Satou M."/>
            <person name="Tamse R."/>
            <person name="Vaysberg M."/>
            <person name="Wallender E.K."/>
            <person name="Wong C."/>
            <person name="Yamamura Y."/>
            <person name="Yuan S."/>
            <person name="Shinozaki K."/>
            <person name="Davis R.W."/>
            <person name="Theologis A."/>
            <person name="Ecker J.R."/>
        </authorList>
    </citation>
    <scope>NUCLEOTIDE SEQUENCE [LARGE SCALE MRNA]</scope>
    <source>
        <strain>cv. Columbia</strain>
    </source>
</reference>
<reference key="5">
    <citation type="journal article" date="2004" name="Curr. Biol.">
        <title>BYPASS1 negatively regulates a root-derived signal that controls plant architecture.</title>
        <authorList>
            <person name="Van Norman J.M."/>
            <person name="Frederick R.L."/>
            <person name="Sieburth L.E."/>
        </authorList>
    </citation>
    <scope>IDENTIFICATION</scope>
    <scope>FUNCTION</scope>
    <scope>TISSUE SPECIFICITY</scope>
</reference>
<reference key="6">
    <citation type="journal article" date="2007" name="Plant J.">
        <title>Dissecting the biosynthetic pathway for the bypass1 root-derived signal.</title>
        <authorList>
            <person name="Van Norman J.M."/>
            <person name="Sieburth L.E."/>
        </authorList>
    </citation>
    <scope>FUNCTION</scope>
</reference>
<dbReference type="EMBL" id="AF083676">
    <property type="protein sequence ID" value="AAN60235.1"/>
    <property type="molecule type" value="mRNA"/>
</dbReference>
<dbReference type="EMBL" id="AC061957">
    <property type="protein sequence ID" value="AAF81313.1"/>
    <property type="molecule type" value="Genomic_DNA"/>
</dbReference>
<dbReference type="EMBL" id="CP002684">
    <property type="protein sequence ID" value="AEE27303.1"/>
    <property type="molecule type" value="Genomic_DNA"/>
</dbReference>
<dbReference type="EMBL" id="CP002684">
    <property type="protein sequence ID" value="AEE27304.1"/>
    <property type="molecule type" value="Genomic_DNA"/>
</dbReference>
<dbReference type="EMBL" id="AF349532">
    <property type="protein sequence ID" value="AAK15579.1"/>
    <property type="molecule type" value="mRNA"/>
</dbReference>
<dbReference type="EMBL" id="AY059805">
    <property type="protein sequence ID" value="AAL24287.1"/>
    <property type="molecule type" value="mRNA"/>
</dbReference>
<dbReference type="EMBL" id="AY063906">
    <property type="protein sequence ID" value="AAL36262.1"/>
    <property type="molecule type" value="mRNA"/>
</dbReference>
<dbReference type="EMBL" id="AY091197">
    <property type="protein sequence ID" value="AAM14136.1"/>
    <property type="molecule type" value="mRNA"/>
</dbReference>
<dbReference type="EMBL" id="BT000041">
    <property type="protein sequence ID" value="AAN15360.1"/>
    <property type="molecule type" value="mRNA"/>
</dbReference>
<dbReference type="PIR" id="B86146">
    <property type="entry name" value="B86146"/>
</dbReference>
<dbReference type="RefSeq" id="NP_001030929.1">
    <property type="nucleotide sequence ID" value="NM_001035852.3"/>
</dbReference>
<dbReference type="RefSeq" id="NP_563630.1">
    <property type="nucleotide sequence ID" value="NM_100037.4"/>
</dbReference>
<dbReference type="SMR" id="Q9LMM6"/>
<dbReference type="FunCoup" id="Q9LMM6">
    <property type="interactions" value="792"/>
</dbReference>
<dbReference type="STRING" id="3702.Q9LMM6"/>
<dbReference type="iPTMnet" id="Q9LMM6"/>
<dbReference type="PaxDb" id="3702-AT1G01550.1"/>
<dbReference type="ProteomicsDB" id="240359"/>
<dbReference type="EnsemblPlants" id="AT1G01550.1">
    <property type="protein sequence ID" value="AT1G01550.1"/>
    <property type="gene ID" value="AT1G01550"/>
</dbReference>
<dbReference type="EnsemblPlants" id="AT1G01550.2">
    <property type="protein sequence ID" value="AT1G01550.2"/>
    <property type="gene ID" value="AT1G01550"/>
</dbReference>
<dbReference type="GeneID" id="839536"/>
<dbReference type="Gramene" id="AT1G01550.1">
    <property type="protein sequence ID" value="AT1G01550.1"/>
    <property type="gene ID" value="AT1G01550"/>
</dbReference>
<dbReference type="Gramene" id="AT1G01550.2">
    <property type="protein sequence ID" value="AT1G01550.2"/>
    <property type="gene ID" value="AT1G01550"/>
</dbReference>
<dbReference type="KEGG" id="ath:AT1G01550"/>
<dbReference type="Araport" id="AT1G01550"/>
<dbReference type="TAIR" id="AT1G01550">
    <property type="gene designation" value="BPS1"/>
</dbReference>
<dbReference type="eggNOG" id="ENOG502QPVM">
    <property type="taxonomic scope" value="Eukaryota"/>
</dbReference>
<dbReference type="HOGENOM" id="CLU_034894_0_0_1"/>
<dbReference type="InParanoid" id="Q9LMM6"/>
<dbReference type="OMA" id="CETHNGI"/>
<dbReference type="PhylomeDB" id="Q9LMM6"/>
<dbReference type="PRO" id="PR:Q9LMM6"/>
<dbReference type="Proteomes" id="UP000006548">
    <property type="component" value="Chromosome 1"/>
</dbReference>
<dbReference type="ExpressionAtlas" id="Q9LMM6">
    <property type="expression patterns" value="baseline and differential"/>
</dbReference>
<dbReference type="GO" id="GO:0009507">
    <property type="term" value="C:chloroplast"/>
    <property type="evidence" value="ECO:0007669"/>
    <property type="project" value="UniProtKB-SubCell"/>
</dbReference>
<dbReference type="GO" id="GO:0009793">
    <property type="term" value="P:embryo development ending in seed dormancy"/>
    <property type="evidence" value="ECO:0000316"/>
    <property type="project" value="TAIR"/>
</dbReference>
<dbReference type="GO" id="GO:0048364">
    <property type="term" value="P:root development"/>
    <property type="evidence" value="ECO:0000315"/>
    <property type="project" value="TAIR"/>
</dbReference>
<dbReference type="GO" id="GO:0048367">
    <property type="term" value="P:shoot system development"/>
    <property type="evidence" value="ECO:0000315"/>
    <property type="project" value="TAIR"/>
</dbReference>
<dbReference type="InterPro" id="IPR004320">
    <property type="entry name" value="BPS1_pln"/>
</dbReference>
<dbReference type="PANTHER" id="PTHR31509">
    <property type="entry name" value="BPS1-LIKE PROTEIN"/>
    <property type="match status" value="1"/>
</dbReference>
<dbReference type="Pfam" id="PF03087">
    <property type="entry name" value="BPS1"/>
    <property type="match status" value="1"/>
</dbReference>
<organism>
    <name type="scientific">Arabidopsis thaliana</name>
    <name type="common">Mouse-ear cress</name>
    <dbReference type="NCBI Taxonomy" id="3702"/>
    <lineage>
        <taxon>Eukaryota</taxon>
        <taxon>Viridiplantae</taxon>
        <taxon>Streptophyta</taxon>
        <taxon>Embryophyta</taxon>
        <taxon>Tracheophyta</taxon>
        <taxon>Spermatophyta</taxon>
        <taxon>Magnoliopsida</taxon>
        <taxon>eudicotyledons</taxon>
        <taxon>Gunneridae</taxon>
        <taxon>Pentapetalae</taxon>
        <taxon>rosids</taxon>
        <taxon>malvids</taxon>
        <taxon>Brassicales</taxon>
        <taxon>Brassicaceae</taxon>
        <taxon>Camelineae</taxon>
        <taxon>Arabidopsis</taxon>
    </lineage>
</organism>
<keyword id="KW-0150">Chloroplast</keyword>
<keyword id="KW-0934">Plastid</keyword>
<keyword id="KW-1185">Reference proteome</keyword>
<keyword id="KW-0809">Transit peptide</keyword>
<name>BPS1_ARATH</name>
<proteinExistence type="evidence at transcript level"/>
<sequence>MARPQDPPRGFFPFGNPFKNLSSKNSVLSSKLLPLLNNFETNLASSISKLVPKEKSDILTVSWMKQAMESLCETHNGIKTLITDLELPVSDWEDKWVDVYLDISVKLLDLCNAFSSELTRLNQGHLLLQFALHNLEANSPQNLSKAQSSLDSWKQHIVSKNPRIENCRAILSSLVQTLNLPKVKNSAKGKVLMRALYGVKVKTLYISGVFAAAFSGSSQNLMYLTVSNELPWAQSFMEVQNTMNAEIKNIFLSDGLTVLKELEAVASGVKKLYPAIQQGSIDPISLQPLKDSVTELSNGIDLVSKEVDCFFKILLSGRDTLLENLRSMGASTLQATSPKKAAGKNYRGF</sequence>